<dbReference type="EC" id="6.2.1.5" evidence="1"/>
<dbReference type="EMBL" id="CP000036">
    <property type="protein sequence ID" value="ABB65274.1"/>
    <property type="molecule type" value="Genomic_DNA"/>
</dbReference>
<dbReference type="RefSeq" id="WP_001048611.1">
    <property type="nucleotide sequence ID" value="NC_007613.1"/>
</dbReference>
<dbReference type="SMR" id="Q324I4"/>
<dbReference type="KEGG" id="sbo:SBO_0586"/>
<dbReference type="HOGENOM" id="CLU_037430_0_2_6"/>
<dbReference type="UniPathway" id="UPA00223">
    <property type="reaction ID" value="UER00999"/>
</dbReference>
<dbReference type="Proteomes" id="UP000007067">
    <property type="component" value="Chromosome"/>
</dbReference>
<dbReference type="GO" id="GO:0005829">
    <property type="term" value="C:cytosol"/>
    <property type="evidence" value="ECO:0007669"/>
    <property type="project" value="TreeGrafter"/>
</dbReference>
<dbReference type="GO" id="GO:0042709">
    <property type="term" value="C:succinate-CoA ligase complex"/>
    <property type="evidence" value="ECO:0007669"/>
    <property type="project" value="TreeGrafter"/>
</dbReference>
<dbReference type="GO" id="GO:0005524">
    <property type="term" value="F:ATP binding"/>
    <property type="evidence" value="ECO:0007669"/>
    <property type="project" value="UniProtKB-UniRule"/>
</dbReference>
<dbReference type="GO" id="GO:0000287">
    <property type="term" value="F:magnesium ion binding"/>
    <property type="evidence" value="ECO:0007669"/>
    <property type="project" value="UniProtKB-UniRule"/>
</dbReference>
<dbReference type="GO" id="GO:0004775">
    <property type="term" value="F:succinate-CoA ligase (ADP-forming) activity"/>
    <property type="evidence" value="ECO:0007669"/>
    <property type="project" value="UniProtKB-UniRule"/>
</dbReference>
<dbReference type="GO" id="GO:0004776">
    <property type="term" value="F:succinate-CoA ligase (GDP-forming) activity"/>
    <property type="evidence" value="ECO:0007669"/>
    <property type="project" value="RHEA"/>
</dbReference>
<dbReference type="GO" id="GO:0006104">
    <property type="term" value="P:succinyl-CoA metabolic process"/>
    <property type="evidence" value="ECO:0007669"/>
    <property type="project" value="TreeGrafter"/>
</dbReference>
<dbReference type="GO" id="GO:0006099">
    <property type="term" value="P:tricarboxylic acid cycle"/>
    <property type="evidence" value="ECO:0007669"/>
    <property type="project" value="UniProtKB-UniRule"/>
</dbReference>
<dbReference type="FunFam" id="3.30.1490.20:FF:000002">
    <property type="entry name" value="Succinate--CoA ligase [ADP-forming] subunit beta"/>
    <property type="match status" value="1"/>
</dbReference>
<dbReference type="FunFam" id="3.30.470.20:FF:000002">
    <property type="entry name" value="Succinate--CoA ligase [ADP-forming] subunit beta"/>
    <property type="match status" value="1"/>
</dbReference>
<dbReference type="FunFam" id="3.40.50.261:FF:000001">
    <property type="entry name" value="Succinate--CoA ligase [ADP-forming] subunit beta"/>
    <property type="match status" value="1"/>
</dbReference>
<dbReference type="Gene3D" id="3.30.1490.20">
    <property type="entry name" value="ATP-grasp fold, A domain"/>
    <property type="match status" value="1"/>
</dbReference>
<dbReference type="Gene3D" id="3.30.470.20">
    <property type="entry name" value="ATP-grasp fold, B domain"/>
    <property type="match status" value="1"/>
</dbReference>
<dbReference type="Gene3D" id="3.40.50.261">
    <property type="entry name" value="Succinyl-CoA synthetase domains"/>
    <property type="match status" value="1"/>
</dbReference>
<dbReference type="HAMAP" id="MF_00558">
    <property type="entry name" value="Succ_CoA_beta"/>
    <property type="match status" value="1"/>
</dbReference>
<dbReference type="InterPro" id="IPR011761">
    <property type="entry name" value="ATP-grasp"/>
</dbReference>
<dbReference type="InterPro" id="IPR013650">
    <property type="entry name" value="ATP-grasp_succ-CoA_synth-type"/>
</dbReference>
<dbReference type="InterPro" id="IPR013815">
    <property type="entry name" value="ATP_grasp_subdomain_1"/>
</dbReference>
<dbReference type="InterPro" id="IPR017866">
    <property type="entry name" value="Succ-CoA_synthase_bsu_CS"/>
</dbReference>
<dbReference type="InterPro" id="IPR005811">
    <property type="entry name" value="SUCC_ACL_C"/>
</dbReference>
<dbReference type="InterPro" id="IPR005809">
    <property type="entry name" value="Succ_CoA_ligase-like_bsu"/>
</dbReference>
<dbReference type="InterPro" id="IPR016102">
    <property type="entry name" value="Succinyl-CoA_synth-like"/>
</dbReference>
<dbReference type="NCBIfam" id="NF001913">
    <property type="entry name" value="PRK00696.1"/>
    <property type="match status" value="1"/>
</dbReference>
<dbReference type="NCBIfam" id="TIGR01016">
    <property type="entry name" value="sucCoAbeta"/>
    <property type="match status" value="1"/>
</dbReference>
<dbReference type="PANTHER" id="PTHR11815:SF10">
    <property type="entry name" value="SUCCINATE--COA LIGASE [GDP-FORMING] SUBUNIT BETA, MITOCHONDRIAL"/>
    <property type="match status" value="1"/>
</dbReference>
<dbReference type="PANTHER" id="PTHR11815">
    <property type="entry name" value="SUCCINYL-COA SYNTHETASE BETA CHAIN"/>
    <property type="match status" value="1"/>
</dbReference>
<dbReference type="Pfam" id="PF08442">
    <property type="entry name" value="ATP-grasp_2"/>
    <property type="match status" value="1"/>
</dbReference>
<dbReference type="Pfam" id="PF00549">
    <property type="entry name" value="Ligase_CoA"/>
    <property type="match status" value="1"/>
</dbReference>
<dbReference type="PIRSF" id="PIRSF001554">
    <property type="entry name" value="SucCS_beta"/>
    <property type="match status" value="1"/>
</dbReference>
<dbReference type="SUPFAM" id="SSF56059">
    <property type="entry name" value="Glutathione synthetase ATP-binding domain-like"/>
    <property type="match status" value="1"/>
</dbReference>
<dbReference type="SUPFAM" id="SSF52210">
    <property type="entry name" value="Succinyl-CoA synthetase domains"/>
    <property type="match status" value="1"/>
</dbReference>
<dbReference type="PROSITE" id="PS50975">
    <property type="entry name" value="ATP_GRASP"/>
    <property type="match status" value="1"/>
</dbReference>
<dbReference type="PROSITE" id="PS01217">
    <property type="entry name" value="SUCCINYL_COA_LIG_3"/>
    <property type="match status" value="1"/>
</dbReference>
<name>SUCC_SHIBS</name>
<evidence type="ECO:0000255" key="1">
    <source>
        <dbReference type="HAMAP-Rule" id="MF_00558"/>
    </source>
</evidence>
<organism>
    <name type="scientific">Shigella boydii serotype 4 (strain Sb227)</name>
    <dbReference type="NCBI Taxonomy" id="300268"/>
    <lineage>
        <taxon>Bacteria</taxon>
        <taxon>Pseudomonadati</taxon>
        <taxon>Pseudomonadota</taxon>
        <taxon>Gammaproteobacteria</taxon>
        <taxon>Enterobacterales</taxon>
        <taxon>Enterobacteriaceae</taxon>
        <taxon>Shigella</taxon>
    </lineage>
</organism>
<comment type="function">
    <text evidence="1">Succinyl-CoA synthetase functions in the citric acid cycle (TCA), coupling the hydrolysis of succinyl-CoA to the synthesis of either ATP or GTP and thus represents the only step of substrate-level phosphorylation in the TCA. The beta subunit provides nucleotide specificity of the enzyme and binds the substrate succinate, while the binding sites for coenzyme A and phosphate are found in the alpha subunit.</text>
</comment>
<comment type="catalytic activity">
    <reaction evidence="1">
        <text>succinate + ATP + CoA = succinyl-CoA + ADP + phosphate</text>
        <dbReference type="Rhea" id="RHEA:17661"/>
        <dbReference type="ChEBI" id="CHEBI:30031"/>
        <dbReference type="ChEBI" id="CHEBI:30616"/>
        <dbReference type="ChEBI" id="CHEBI:43474"/>
        <dbReference type="ChEBI" id="CHEBI:57287"/>
        <dbReference type="ChEBI" id="CHEBI:57292"/>
        <dbReference type="ChEBI" id="CHEBI:456216"/>
        <dbReference type="EC" id="6.2.1.5"/>
    </reaction>
    <physiologicalReaction direction="right-to-left" evidence="1">
        <dbReference type="Rhea" id="RHEA:17663"/>
    </physiologicalReaction>
</comment>
<comment type="catalytic activity">
    <reaction evidence="1">
        <text>GTP + succinate + CoA = succinyl-CoA + GDP + phosphate</text>
        <dbReference type="Rhea" id="RHEA:22120"/>
        <dbReference type="ChEBI" id="CHEBI:30031"/>
        <dbReference type="ChEBI" id="CHEBI:37565"/>
        <dbReference type="ChEBI" id="CHEBI:43474"/>
        <dbReference type="ChEBI" id="CHEBI:57287"/>
        <dbReference type="ChEBI" id="CHEBI:57292"/>
        <dbReference type="ChEBI" id="CHEBI:58189"/>
    </reaction>
    <physiologicalReaction direction="right-to-left" evidence="1">
        <dbReference type="Rhea" id="RHEA:22122"/>
    </physiologicalReaction>
</comment>
<comment type="cofactor">
    <cofactor evidence="1">
        <name>Mg(2+)</name>
        <dbReference type="ChEBI" id="CHEBI:18420"/>
    </cofactor>
    <text evidence="1">Binds 1 Mg(2+) ion per subunit.</text>
</comment>
<comment type="pathway">
    <text evidence="1">Carbohydrate metabolism; tricarboxylic acid cycle; succinate from succinyl-CoA (ligase route): step 1/1.</text>
</comment>
<comment type="subunit">
    <text evidence="1">Heterotetramer of two alpha and two beta subunits.</text>
</comment>
<comment type="similarity">
    <text evidence="1">Belongs to the succinate/malate CoA ligase beta subunit family.</text>
</comment>
<protein>
    <recommendedName>
        <fullName evidence="1">Succinate--CoA ligase [ADP-forming] subunit beta</fullName>
        <ecNumber evidence="1">6.2.1.5</ecNumber>
    </recommendedName>
    <alternativeName>
        <fullName evidence="1">Succinyl-CoA synthetase subunit beta</fullName>
        <shortName evidence="1">SCS-beta</shortName>
    </alternativeName>
</protein>
<feature type="chain" id="PRO_1000082232" description="Succinate--CoA ligase [ADP-forming] subunit beta">
    <location>
        <begin position="1"/>
        <end position="388"/>
    </location>
</feature>
<feature type="domain" description="ATP-grasp" evidence="1">
    <location>
        <begin position="9"/>
        <end position="244"/>
    </location>
</feature>
<feature type="binding site" evidence="1">
    <location>
        <position position="46"/>
    </location>
    <ligand>
        <name>ATP</name>
        <dbReference type="ChEBI" id="CHEBI:30616"/>
    </ligand>
</feature>
<feature type="binding site" evidence="1">
    <location>
        <begin position="53"/>
        <end position="55"/>
    </location>
    <ligand>
        <name>ATP</name>
        <dbReference type="ChEBI" id="CHEBI:30616"/>
    </ligand>
</feature>
<feature type="binding site" evidence="1">
    <location>
        <position position="99"/>
    </location>
    <ligand>
        <name>ATP</name>
        <dbReference type="ChEBI" id="CHEBI:30616"/>
    </ligand>
</feature>
<feature type="binding site" evidence="1">
    <location>
        <position position="102"/>
    </location>
    <ligand>
        <name>ATP</name>
        <dbReference type="ChEBI" id="CHEBI:30616"/>
    </ligand>
</feature>
<feature type="binding site" evidence="1">
    <location>
        <position position="107"/>
    </location>
    <ligand>
        <name>ATP</name>
        <dbReference type="ChEBI" id="CHEBI:30616"/>
    </ligand>
</feature>
<feature type="binding site" evidence="1">
    <location>
        <position position="199"/>
    </location>
    <ligand>
        <name>Mg(2+)</name>
        <dbReference type="ChEBI" id="CHEBI:18420"/>
    </ligand>
</feature>
<feature type="binding site" evidence="1">
    <location>
        <position position="213"/>
    </location>
    <ligand>
        <name>Mg(2+)</name>
        <dbReference type="ChEBI" id="CHEBI:18420"/>
    </ligand>
</feature>
<feature type="binding site" evidence="1">
    <location>
        <position position="264"/>
    </location>
    <ligand>
        <name>substrate</name>
        <note>ligand shared with subunit alpha</note>
    </ligand>
</feature>
<feature type="binding site" evidence="1">
    <location>
        <begin position="321"/>
        <end position="323"/>
    </location>
    <ligand>
        <name>substrate</name>
        <note>ligand shared with subunit alpha</note>
    </ligand>
</feature>
<keyword id="KW-0067">ATP-binding</keyword>
<keyword id="KW-0436">Ligase</keyword>
<keyword id="KW-0460">Magnesium</keyword>
<keyword id="KW-0479">Metal-binding</keyword>
<keyword id="KW-0547">Nucleotide-binding</keyword>
<keyword id="KW-0816">Tricarboxylic acid cycle</keyword>
<proteinExistence type="inferred from homology"/>
<gene>
    <name evidence="1" type="primary">sucC</name>
    <name type="ordered locus">SBO_0586</name>
</gene>
<reference key="1">
    <citation type="journal article" date="2005" name="Nucleic Acids Res.">
        <title>Genome dynamics and diversity of Shigella species, the etiologic agents of bacillary dysentery.</title>
        <authorList>
            <person name="Yang F."/>
            <person name="Yang J."/>
            <person name="Zhang X."/>
            <person name="Chen L."/>
            <person name="Jiang Y."/>
            <person name="Yan Y."/>
            <person name="Tang X."/>
            <person name="Wang J."/>
            <person name="Xiong Z."/>
            <person name="Dong J."/>
            <person name="Xue Y."/>
            <person name="Zhu Y."/>
            <person name="Xu X."/>
            <person name="Sun L."/>
            <person name="Chen S."/>
            <person name="Nie H."/>
            <person name="Peng J."/>
            <person name="Xu J."/>
            <person name="Wang Y."/>
            <person name="Yuan Z."/>
            <person name="Wen Y."/>
            <person name="Yao Z."/>
            <person name="Shen Y."/>
            <person name="Qiang B."/>
            <person name="Hou Y."/>
            <person name="Yu J."/>
            <person name="Jin Q."/>
        </authorList>
    </citation>
    <scope>NUCLEOTIDE SEQUENCE [LARGE SCALE GENOMIC DNA]</scope>
    <source>
        <strain>Sb227</strain>
    </source>
</reference>
<accession>Q324I4</accession>
<sequence>MNLHEYQAKQLFARYGLPAPVGYACTTPREAEEAASKIGAGPWVVKCQVHAGGRGKAGGVKVVNSKEDIRAFAENWLGKRLVTYQTDANGQPVNQILVEAATDIAKELYLGAVVDRSSRRVVFMASTEGGVEIEKVAEETPQLIHKVALDPLTGPMPYQGRELAFKLGLEGKLVQQFTKIFMGLATIFLERDLALIEINPLVITKQGDLICLDGKLGADGNALFRQLDLREMRDQSQEDPREAQAAQWELNYVALDGNIGCMVNGAGLAMGTMDIVKLHGGEPANFLDVGGGATKERVTEAFKIILSDDKVKVVLVNIFGGIVRCDLIADGIIGAVAEVGVNVPVVVRLEGNNAELGAKKLADSGLNIIAAKGLTDAAQQVVAAVEGK</sequence>